<keyword id="KW-0963">Cytoplasm</keyword>
<keyword id="KW-0227">DNA damage</keyword>
<keyword id="KW-0233">DNA recombination</keyword>
<keyword id="KW-0234">DNA repair</keyword>
<keyword id="KW-0238">DNA-binding</keyword>
<keyword id="KW-1185">Reference proteome</keyword>
<feature type="chain" id="PRO_0000224868" description="Holliday junction branch migration complex subunit RuvA">
    <location>
        <begin position="1"/>
        <end position="205"/>
    </location>
</feature>
<feature type="region of interest" description="Domain I" evidence="1">
    <location>
        <begin position="1"/>
        <end position="64"/>
    </location>
</feature>
<feature type="region of interest" description="Domain II" evidence="1">
    <location>
        <begin position="65"/>
        <end position="143"/>
    </location>
</feature>
<feature type="region of interest" description="Flexible linker" evidence="1">
    <location>
        <begin position="144"/>
        <end position="156"/>
    </location>
</feature>
<feature type="region of interest" description="Domain III" evidence="1">
    <location>
        <begin position="157"/>
        <end position="205"/>
    </location>
</feature>
<organism>
    <name type="scientific">Pectobacterium atrosepticum (strain SCRI 1043 / ATCC BAA-672)</name>
    <name type="common">Erwinia carotovora subsp. atroseptica</name>
    <dbReference type="NCBI Taxonomy" id="218491"/>
    <lineage>
        <taxon>Bacteria</taxon>
        <taxon>Pseudomonadati</taxon>
        <taxon>Pseudomonadota</taxon>
        <taxon>Gammaproteobacteria</taxon>
        <taxon>Enterobacterales</taxon>
        <taxon>Pectobacteriaceae</taxon>
        <taxon>Pectobacterium</taxon>
    </lineage>
</organism>
<name>RUVA_PECAS</name>
<proteinExistence type="inferred from homology"/>
<protein>
    <recommendedName>
        <fullName evidence="1">Holliday junction branch migration complex subunit RuvA</fullName>
    </recommendedName>
</protein>
<sequence>MIGRLRGIILEKQPPQVLIEANGVGYEVHMPMTCFYELPELNQEAIIFTHFVVREDAQLLFGFNDKQERALFRELIKVNGVGPKLALAILSGMSATQFVSAVEREEIGALIKLPGVGKKTAERLVVEMKDRFKGLSGDLFNSVSDIPLTSPANVDNRVGEPEAEAAAALVALGYKPQEASRMISKIARPDADCETLIRDALRAAL</sequence>
<evidence type="ECO:0000255" key="1">
    <source>
        <dbReference type="HAMAP-Rule" id="MF_00031"/>
    </source>
</evidence>
<dbReference type="EMBL" id="BX950851">
    <property type="protein sequence ID" value="CAG75392.1"/>
    <property type="molecule type" value="Genomic_DNA"/>
</dbReference>
<dbReference type="RefSeq" id="WP_011094039.1">
    <property type="nucleotide sequence ID" value="NC_004547.2"/>
</dbReference>
<dbReference type="SMR" id="Q6D4A1"/>
<dbReference type="STRING" id="218491.ECA2492"/>
<dbReference type="GeneID" id="57208798"/>
<dbReference type="KEGG" id="eca:ECA2492"/>
<dbReference type="PATRIC" id="fig|218491.5.peg.2522"/>
<dbReference type="eggNOG" id="COG0632">
    <property type="taxonomic scope" value="Bacteria"/>
</dbReference>
<dbReference type="HOGENOM" id="CLU_087936_0_0_6"/>
<dbReference type="OrthoDB" id="5293449at2"/>
<dbReference type="Proteomes" id="UP000007966">
    <property type="component" value="Chromosome"/>
</dbReference>
<dbReference type="GO" id="GO:0005737">
    <property type="term" value="C:cytoplasm"/>
    <property type="evidence" value="ECO:0007669"/>
    <property type="project" value="UniProtKB-SubCell"/>
</dbReference>
<dbReference type="GO" id="GO:0009379">
    <property type="term" value="C:Holliday junction helicase complex"/>
    <property type="evidence" value="ECO:0007669"/>
    <property type="project" value="InterPro"/>
</dbReference>
<dbReference type="GO" id="GO:0048476">
    <property type="term" value="C:Holliday junction resolvase complex"/>
    <property type="evidence" value="ECO:0007669"/>
    <property type="project" value="UniProtKB-UniRule"/>
</dbReference>
<dbReference type="GO" id="GO:0005524">
    <property type="term" value="F:ATP binding"/>
    <property type="evidence" value="ECO:0007669"/>
    <property type="project" value="InterPro"/>
</dbReference>
<dbReference type="GO" id="GO:0000400">
    <property type="term" value="F:four-way junction DNA binding"/>
    <property type="evidence" value="ECO:0007669"/>
    <property type="project" value="UniProtKB-UniRule"/>
</dbReference>
<dbReference type="GO" id="GO:0009378">
    <property type="term" value="F:four-way junction helicase activity"/>
    <property type="evidence" value="ECO:0007669"/>
    <property type="project" value="InterPro"/>
</dbReference>
<dbReference type="GO" id="GO:0006310">
    <property type="term" value="P:DNA recombination"/>
    <property type="evidence" value="ECO:0007669"/>
    <property type="project" value="UniProtKB-UniRule"/>
</dbReference>
<dbReference type="GO" id="GO:0006281">
    <property type="term" value="P:DNA repair"/>
    <property type="evidence" value="ECO:0007669"/>
    <property type="project" value="UniProtKB-UniRule"/>
</dbReference>
<dbReference type="CDD" id="cd14332">
    <property type="entry name" value="UBA_RuvA_C"/>
    <property type="match status" value="1"/>
</dbReference>
<dbReference type="FunFam" id="1.10.150.20:FF:000012">
    <property type="entry name" value="Holliday junction ATP-dependent DNA helicase RuvA"/>
    <property type="match status" value="1"/>
</dbReference>
<dbReference type="FunFam" id="1.10.8.10:FF:000008">
    <property type="entry name" value="Holliday junction ATP-dependent DNA helicase RuvA"/>
    <property type="match status" value="1"/>
</dbReference>
<dbReference type="FunFam" id="2.40.50.140:FF:000083">
    <property type="entry name" value="Holliday junction ATP-dependent DNA helicase RuvA"/>
    <property type="match status" value="1"/>
</dbReference>
<dbReference type="Gene3D" id="1.10.150.20">
    <property type="entry name" value="5' to 3' exonuclease, C-terminal subdomain"/>
    <property type="match status" value="1"/>
</dbReference>
<dbReference type="Gene3D" id="1.10.8.10">
    <property type="entry name" value="DNA helicase RuvA subunit, C-terminal domain"/>
    <property type="match status" value="1"/>
</dbReference>
<dbReference type="Gene3D" id="2.40.50.140">
    <property type="entry name" value="Nucleic acid-binding proteins"/>
    <property type="match status" value="1"/>
</dbReference>
<dbReference type="HAMAP" id="MF_00031">
    <property type="entry name" value="DNA_HJ_migration_RuvA"/>
    <property type="match status" value="1"/>
</dbReference>
<dbReference type="InterPro" id="IPR013849">
    <property type="entry name" value="DNA_helicase_Holl-junc_RuvA_I"/>
</dbReference>
<dbReference type="InterPro" id="IPR003583">
    <property type="entry name" value="Hlx-hairpin-Hlx_DNA-bd_motif"/>
</dbReference>
<dbReference type="InterPro" id="IPR012340">
    <property type="entry name" value="NA-bd_OB-fold"/>
</dbReference>
<dbReference type="InterPro" id="IPR000085">
    <property type="entry name" value="RuvA"/>
</dbReference>
<dbReference type="InterPro" id="IPR010994">
    <property type="entry name" value="RuvA_2-like"/>
</dbReference>
<dbReference type="InterPro" id="IPR011114">
    <property type="entry name" value="RuvA_C"/>
</dbReference>
<dbReference type="InterPro" id="IPR036267">
    <property type="entry name" value="RuvA_C_sf"/>
</dbReference>
<dbReference type="NCBIfam" id="TIGR00084">
    <property type="entry name" value="ruvA"/>
    <property type="match status" value="1"/>
</dbReference>
<dbReference type="Pfam" id="PF14520">
    <property type="entry name" value="HHH_5"/>
    <property type="match status" value="1"/>
</dbReference>
<dbReference type="Pfam" id="PF07499">
    <property type="entry name" value="RuvA_C"/>
    <property type="match status" value="1"/>
</dbReference>
<dbReference type="Pfam" id="PF01330">
    <property type="entry name" value="RuvA_N"/>
    <property type="match status" value="1"/>
</dbReference>
<dbReference type="SMART" id="SM00278">
    <property type="entry name" value="HhH1"/>
    <property type="match status" value="2"/>
</dbReference>
<dbReference type="SUPFAM" id="SSF46929">
    <property type="entry name" value="DNA helicase RuvA subunit, C-terminal domain"/>
    <property type="match status" value="1"/>
</dbReference>
<dbReference type="SUPFAM" id="SSF50249">
    <property type="entry name" value="Nucleic acid-binding proteins"/>
    <property type="match status" value="1"/>
</dbReference>
<dbReference type="SUPFAM" id="SSF47781">
    <property type="entry name" value="RuvA domain 2-like"/>
    <property type="match status" value="1"/>
</dbReference>
<gene>
    <name evidence="1" type="primary">ruvA</name>
    <name type="ordered locus">ECA2492</name>
</gene>
<comment type="function">
    <text evidence="1">The RuvA-RuvB-RuvC complex processes Holliday junction (HJ) DNA during genetic recombination and DNA repair, while the RuvA-RuvB complex plays an important role in the rescue of blocked DNA replication forks via replication fork reversal (RFR). RuvA specifically binds to HJ cruciform DNA, conferring on it an open structure. The RuvB hexamer acts as an ATP-dependent pump, pulling dsDNA into and through the RuvAB complex. HJ branch migration allows RuvC to scan DNA until it finds its consensus sequence, where it cleaves and resolves the cruciform DNA.</text>
</comment>
<comment type="subunit">
    <text evidence="1">Homotetramer. Forms an RuvA(8)-RuvB(12)-Holliday junction (HJ) complex. HJ DNA is sandwiched between 2 RuvA tetramers; dsDNA enters through RuvA and exits via RuvB. An RuvB hexamer assembles on each DNA strand where it exits the tetramer. Each RuvB hexamer is contacted by two RuvA subunits (via domain III) on 2 adjacent RuvB subunits; this complex drives branch migration. In the full resolvosome a probable DNA-RuvA(4)-RuvB(12)-RuvC(2) complex forms which resolves the HJ.</text>
</comment>
<comment type="subcellular location">
    <subcellularLocation>
        <location evidence="1">Cytoplasm</location>
    </subcellularLocation>
</comment>
<comment type="domain">
    <text evidence="1">Has three domains with a flexible linker between the domains II and III and assumes an 'L' shape. Domain III is highly mobile and contacts RuvB.</text>
</comment>
<comment type="similarity">
    <text evidence="1">Belongs to the RuvA family.</text>
</comment>
<reference key="1">
    <citation type="journal article" date="2004" name="Proc. Natl. Acad. Sci. U.S.A.">
        <title>Genome sequence of the enterobacterial phytopathogen Erwinia carotovora subsp. atroseptica and characterization of virulence factors.</title>
        <authorList>
            <person name="Bell K.S."/>
            <person name="Sebaihia M."/>
            <person name="Pritchard L."/>
            <person name="Holden M.T.G."/>
            <person name="Hyman L.J."/>
            <person name="Holeva M.C."/>
            <person name="Thomson N.R."/>
            <person name="Bentley S.D."/>
            <person name="Churcher L.J.C."/>
            <person name="Mungall K."/>
            <person name="Atkin R."/>
            <person name="Bason N."/>
            <person name="Brooks K."/>
            <person name="Chillingworth T."/>
            <person name="Clark K."/>
            <person name="Doggett J."/>
            <person name="Fraser A."/>
            <person name="Hance Z."/>
            <person name="Hauser H."/>
            <person name="Jagels K."/>
            <person name="Moule S."/>
            <person name="Norbertczak H."/>
            <person name="Ormond D."/>
            <person name="Price C."/>
            <person name="Quail M.A."/>
            <person name="Sanders M."/>
            <person name="Walker D."/>
            <person name="Whitehead S."/>
            <person name="Salmond G.P.C."/>
            <person name="Birch P.R.J."/>
            <person name="Parkhill J."/>
            <person name="Toth I.K."/>
        </authorList>
    </citation>
    <scope>NUCLEOTIDE SEQUENCE [LARGE SCALE GENOMIC DNA]</scope>
    <source>
        <strain>SCRI 1043 / ATCC BAA-672</strain>
    </source>
</reference>
<accession>Q6D4A1</accession>